<organism>
    <name type="scientific">Rhodobacter capsulatus (strain ATCC BAA-309 / NBRC 16581 / SB1003)</name>
    <dbReference type="NCBI Taxonomy" id="272942"/>
    <lineage>
        <taxon>Bacteria</taxon>
        <taxon>Pseudomonadati</taxon>
        <taxon>Pseudomonadota</taxon>
        <taxon>Alphaproteobacteria</taxon>
        <taxon>Rhodobacterales</taxon>
        <taxon>Rhodobacter group</taxon>
        <taxon>Rhodobacter</taxon>
    </lineage>
</organism>
<name>RBL1_RHOCB</name>
<accession>O32740</accession>
<accession>D5ANJ0</accession>
<feature type="chain" id="PRO_0000062645" description="Ribulose bisphosphate carboxylase large chain">
    <location>
        <begin position="1"/>
        <end position="473"/>
    </location>
</feature>
<feature type="active site" description="Proton acceptor" evidence="1">
    <location>
        <position position="168"/>
    </location>
</feature>
<feature type="active site" description="Proton acceptor" evidence="1">
    <location>
        <position position="287"/>
    </location>
</feature>
<feature type="binding site" description="in homodimeric partner" evidence="1">
    <location>
        <position position="116"/>
    </location>
    <ligand>
        <name>substrate</name>
    </ligand>
</feature>
<feature type="binding site" evidence="1">
    <location>
        <position position="166"/>
    </location>
    <ligand>
        <name>substrate</name>
    </ligand>
</feature>
<feature type="binding site" evidence="1">
    <location>
        <position position="170"/>
    </location>
    <ligand>
        <name>substrate</name>
    </ligand>
</feature>
<feature type="binding site" description="via carbamate group" evidence="1">
    <location>
        <position position="194"/>
    </location>
    <ligand>
        <name>Mg(2+)</name>
        <dbReference type="ChEBI" id="CHEBI:18420"/>
    </ligand>
</feature>
<feature type="binding site" evidence="1">
    <location>
        <position position="196"/>
    </location>
    <ligand>
        <name>Mg(2+)</name>
        <dbReference type="ChEBI" id="CHEBI:18420"/>
    </ligand>
</feature>
<feature type="binding site" evidence="1">
    <location>
        <position position="197"/>
    </location>
    <ligand>
        <name>Mg(2+)</name>
        <dbReference type="ChEBI" id="CHEBI:18420"/>
    </ligand>
</feature>
<feature type="binding site" evidence="1">
    <location>
        <position position="288"/>
    </location>
    <ligand>
        <name>substrate</name>
    </ligand>
</feature>
<feature type="binding site" evidence="1">
    <location>
        <position position="320"/>
    </location>
    <ligand>
        <name>substrate</name>
    </ligand>
</feature>
<feature type="binding site" evidence="1">
    <location>
        <position position="372"/>
    </location>
    <ligand>
        <name>substrate</name>
    </ligand>
</feature>
<feature type="site" description="Transition state stabilizer" evidence="1">
    <location>
        <position position="327"/>
    </location>
</feature>
<feature type="modified residue" description="N6-carboxylysine" evidence="1">
    <location>
        <position position="194"/>
    </location>
</feature>
<comment type="function">
    <text evidence="1">RuBisCO catalyzes two reactions: the carboxylation of D-ribulose 1,5-bisphosphate, the primary event in carbon dioxide fixation, as well as the oxidative fragmentation of the pentose substrate. Both reactions occur simultaneously and in competition at the same active site.</text>
</comment>
<comment type="catalytic activity">
    <reaction evidence="1">
        <text>2 (2R)-3-phosphoglycerate + 2 H(+) = D-ribulose 1,5-bisphosphate + CO2 + H2O</text>
        <dbReference type="Rhea" id="RHEA:23124"/>
        <dbReference type="ChEBI" id="CHEBI:15377"/>
        <dbReference type="ChEBI" id="CHEBI:15378"/>
        <dbReference type="ChEBI" id="CHEBI:16526"/>
        <dbReference type="ChEBI" id="CHEBI:57870"/>
        <dbReference type="ChEBI" id="CHEBI:58272"/>
        <dbReference type="EC" id="4.1.1.39"/>
    </reaction>
</comment>
<comment type="catalytic activity">
    <reaction evidence="1">
        <text>D-ribulose 1,5-bisphosphate + O2 = 2-phosphoglycolate + (2R)-3-phosphoglycerate + 2 H(+)</text>
        <dbReference type="Rhea" id="RHEA:36631"/>
        <dbReference type="ChEBI" id="CHEBI:15378"/>
        <dbReference type="ChEBI" id="CHEBI:15379"/>
        <dbReference type="ChEBI" id="CHEBI:57870"/>
        <dbReference type="ChEBI" id="CHEBI:58033"/>
        <dbReference type="ChEBI" id="CHEBI:58272"/>
    </reaction>
</comment>
<comment type="cofactor">
    <cofactor evidence="1">
        <name>Mg(2+)</name>
        <dbReference type="ChEBI" id="CHEBI:18420"/>
    </cofactor>
    <text evidence="1">Binds 1 Mg(2+) ion per subunit.</text>
</comment>
<comment type="subunit">
    <text evidence="1">Heterohexadecamer of 8 large chains and 8 small chains.</text>
</comment>
<comment type="miscellaneous">
    <text evidence="1">The basic functional RuBisCO is composed of a large chain homodimer in a 'head-to-tail' conformation. In form I RuBisCO this homodimer is arranged in a barrel-like tetramer with the small subunits forming a tetrameric 'cap' on each end of the 'barrel'.</text>
</comment>
<comment type="similarity">
    <text evidence="1">Belongs to the RuBisCO large chain family. Type I subfamily.</text>
</comment>
<keyword id="KW-0113">Calvin cycle</keyword>
<keyword id="KW-0120">Carbon dioxide fixation</keyword>
<keyword id="KW-0456">Lyase</keyword>
<keyword id="KW-0460">Magnesium</keyword>
<keyword id="KW-0479">Metal-binding</keyword>
<keyword id="KW-0503">Monooxygenase</keyword>
<keyword id="KW-0560">Oxidoreductase</keyword>
<keyword id="KW-0602">Photosynthesis</keyword>
<keyword id="KW-1185">Reference proteome</keyword>
<gene>
    <name evidence="1" type="primary">cbbL</name>
    <name type="synonym">cbbL1</name>
    <name type="ordered locus">RCAP_rcc00579</name>
</gene>
<sequence length="473" mass="53037">MAAKTYDAGVKDYRSIYWEPQYQVKDSDILAVFKVVPQPGVSREEAAAAVAAESSTATWTTVWTDLLTDLDYYKGRAYAIEDVPGSDEAFYAFIAYPMDLFEEGSVVNVFTSLVGNVFGFKAVRALRLEDVRFPLWFVMTCPGAPHGMKVERDLLDKYGRPLLGCTIKPKLGLAAKNYGRAVYECLRGGLDFTKDDENVNSQPFLRWRDRFLFCQEAIQKAEAETGERKGHYMNVTAGTMEEIYERAEFAKEIGTPIIMSDYLTVGWAAHTSLSRWCRKNGMLLHVHRAMHAVMDRNPNHGINFRVLAKILRLMGGDHLHSGTVVGKLEGDREATIGWINLLRDRFIKADRSRGIFFDQDWGPQPGLFPVASGGIHVWHMPALVSIFGNDSVLQFGGGTLGHPWGNAAGACANRVALEACVQARNEGRHLEKEGKEILTKAAQSSPELRMAMETWKEIKFEFDTVDKLDVQHR</sequence>
<evidence type="ECO:0000255" key="1">
    <source>
        <dbReference type="HAMAP-Rule" id="MF_01338"/>
    </source>
</evidence>
<protein>
    <recommendedName>
        <fullName evidence="1">Ribulose bisphosphate carboxylase large chain</fullName>
        <shortName evidence="1">RuBisCO large subunit</shortName>
        <ecNumber evidence="1">4.1.1.39</ecNumber>
    </recommendedName>
</protein>
<dbReference type="EC" id="4.1.1.39" evidence="1"/>
<dbReference type="EMBL" id="L82000">
    <property type="protein sequence ID" value="AAC37141.1"/>
    <property type="molecule type" value="Genomic_DNA"/>
</dbReference>
<dbReference type="EMBL" id="CP001312">
    <property type="protein sequence ID" value="ADE84344.1"/>
    <property type="molecule type" value="Genomic_DNA"/>
</dbReference>
<dbReference type="RefSeq" id="WP_013066323.1">
    <property type="nucleotide sequence ID" value="NC_014034.1"/>
</dbReference>
<dbReference type="SMR" id="O32740"/>
<dbReference type="STRING" id="272942.RCAP_rcc00579"/>
<dbReference type="GeneID" id="31489529"/>
<dbReference type="KEGG" id="rcp:RCAP_rcc00579"/>
<dbReference type="eggNOG" id="COG1850">
    <property type="taxonomic scope" value="Bacteria"/>
</dbReference>
<dbReference type="HOGENOM" id="CLU_031450_2_0_5"/>
<dbReference type="OrthoDB" id="9764279at2"/>
<dbReference type="Proteomes" id="UP000002361">
    <property type="component" value="Chromosome"/>
</dbReference>
<dbReference type="GO" id="GO:0000287">
    <property type="term" value="F:magnesium ion binding"/>
    <property type="evidence" value="ECO:0007669"/>
    <property type="project" value="UniProtKB-UniRule"/>
</dbReference>
<dbReference type="GO" id="GO:0004497">
    <property type="term" value="F:monooxygenase activity"/>
    <property type="evidence" value="ECO:0007669"/>
    <property type="project" value="UniProtKB-KW"/>
</dbReference>
<dbReference type="GO" id="GO:0016984">
    <property type="term" value="F:ribulose-bisphosphate carboxylase activity"/>
    <property type="evidence" value="ECO:0007669"/>
    <property type="project" value="UniProtKB-UniRule"/>
</dbReference>
<dbReference type="GO" id="GO:0019253">
    <property type="term" value="P:reductive pentose-phosphate cycle"/>
    <property type="evidence" value="ECO:0007669"/>
    <property type="project" value="UniProtKB-UniRule"/>
</dbReference>
<dbReference type="Gene3D" id="3.20.20.110">
    <property type="entry name" value="Ribulose bisphosphate carboxylase, large subunit, C-terminal domain"/>
    <property type="match status" value="1"/>
</dbReference>
<dbReference type="Gene3D" id="3.30.70.150">
    <property type="entry name" value="RuBisCO large subunit, N-terminal domain"/>
    <property type="match status" value="1"/>
</dbReference>
<dbReference type="HAMAP" id="MF_01338">
    <property type="entry name" value="RuBisCO_L_type1"/>
    <property type="match status" value="1"/>
</dbReference>
<dbReference type="InterPro" id="IPR033966">
    <property type="entry name" value="RuBisCO"/>
</dbReference>
<dbReference type="InterPro" id="IPR020878">
    <property type="entry name" value="RuBisCo_large_chain_AS"/>
</dbReference>
<dbReference type="InterPro" id="IPR000685">
    <property type="entry name" value="RuBisCO_lsu_C"/>
</dbReference>
<dbReference type="InterPro" id="IPR036376">
    <property type="entry name" value="RuBisCO_lsu_C_sf"/>
</dbReference>
<dbReference type="InterPro" id="IPR017443">
    <property type="entry name" value="RuBisCO_lsu_fd_N"/>
</dbReference>
<dbReference type="InterPro" id="IPR036422">
    <property type="entry name" value="RuBisCO_lsu_N_sf"/>
</dbReference>
<dbReference type="InterPro" id="IPR020888">
    <property type="entry name" value="RuBisCO_lsuI"/>
</dbReference>
<dbReference type="NCBIfam" id="NF003252">
    <property type="entry name" value="PRK04208.1"/>
    <property type="match status" value="1"/>
</dbReference>
<dbReference type="PANTHER" id="PTHR42704">
    <property type="entry name" value="RIBULOSE BISPHOSPHATE CARBOXYLASE"/>
    <property type="match status" value="1"/>
</dbReference>
<dbReference type="PANTHER" id="PTHR42704:SF17">
    <property type="entry name" value="RIBULOSE BISPHOSPHATE CARBOXYLASE LARGE CHAIN"/>
    <property type="match status" value="1"/>
</dbReference>
<dbReference type="Pfam" id="PF00016">
    <property type="entry name" value="RuBisCO_large"/>
    <property type="match status" value="1"/>
</dbReference>
<dbReference type="Pfam" id="PF02788">
    <property type="entry name" value="RuBisCO_large_N"/>
    <property type="match status" value="1"/>
</dbReference>
<dbReference type="SFLD" id="SFLDG01052">
    <property type="entry name" value="RuBisCO"/>
    <property type="match status" value="1"/>
</dbReference>
<dbReference type="SFLD" id="SFLDS00014">
    <property type="entry name" value="RuBisCO"/>
    <property type="match status" value="1"/>
</dbReference>
<dbReference type="SFLD" id="SFLDG00301">
    <property type="entry name" value="RuBisCO-like_proteins"/>
    <property type="match status" value="1"/>
</dbReference>
<dbReference type="SUPFAM" id="SSF51649">
    <property type="entry name" value="RuBisCo, C-terminal domain"/>
    <property type="match status" value="1"/>
</dbReference>
<dbReference type="SUPFAM" id="SSF54966">
    <property type="entry name" value="RuBisCO, large subunit, small (N-terminal) domain"/>
    <property type="match status" value="1"/>
</dbReference>
<dbReference type="PROSITE" id="PS00157">
    <property type="entry name" value="RUBISCO_LARGE"/>
    <property type="match status" value="1"/>
</dbReference>
<reference key="1">
    <citation type="journal article" date="1998" name="Microbiology">
        <title>Rhodobacter capsulatus genes encoding form I ribulose-1,5-bisphosphate carboxylase/oxygenase (cbbLS) and neighbouring genes were acquired by a horizontal gene transfer.</title>
        <authorList>
            <person name="Paoli G.C."/>
            <person name="Soyer F."/>
            <person name="Shively J."/>
            <person name="Tabita F.R."/>
        </authorList>
    </citation>
    <scope>NUCLEOTIDE SEQUENCE [GENOMIC DNA]</scope>
    <source>
        <strain>ATCC BAA-309 / NBRC 16581 / SB1003</strain>
    </source>
</reference>
<reference key="2">
    <citation type="journal article" date="2010" name="J. Bacteriol.">
        <title>Complete genome sequence of the photosynthetic purple nonsulfur bacterium Rhodobacter capsulatus SB 1003.</title>
        <authorList>
            <person name="Strnad H."/>
            <person name="Lapidus A."/>
            <person name="Paces J."/>
            <person name="Ulbrich P."/>
            <person name="Vlcek C."/>
            <person name="Paces V."/>
            <person name="Haselkorn R."/>
        </authorList>
    </citation>
    <scope>NUCLEOTIDE SEQUENCE [LARGE SCALE GENOMIC DNA]</scope>
    <source>
        <strain>ATCC BAA-309 / NBRC 16581 / SB1003</strain>
    </source>
</reference>
<reference key="3">
    <citation type="journal article" date="1995" name="Arch. Microbiol.">
        <title>Expression of the cbbLcbbS and cbbM genes and distinct organization of the cbb Calvin cycle structural genes of Rhodobacter capsulatus.</title>
        <authorList>
            <person name="Paoli G.C."/>
            <person name="Morgan N.S."/>
            <person name="Tabita F.R."/>
            <person name="Shively J.M."/>
        </authorList>
    </citation>
    <scope>OPERON ORGANIZATION</scope>
    <source>
        <strain>ATCC BAA-309 / NBRC 16581 / SB1003</strain>
    </source>
</reference>
<proteinExistence type="inferred from homology"/>